<comment type="function">
    <text evidence="1">Involved in peptide bond synthesis. Stimulates efficient translation and peptide-bond synthesis on native or reconstituted 70S ribosomes in vitro. Probably functions indirectly by altering the affinity of the ribosome for aminoacyl-tRNA, thus increasing their reactivity as acceptors for peptidyl transferase.</text>
</comment>
<comment type="pathway">
    <text evidence="1">Protein biosynthesis; polypeptide chain elongation.</text>
</comment>
<comment type="subcellular location">
    <subcellularLocation>
        <location evidence="1">Cytoplasm</location>
    </subcellularLocation>
</comment>
<comment type="similarity">
    <text evidence="1">Belongs to the elongation factor P family.</text>
</comment>
<keyword id="KW-0963">Cytoplasm</keyword>
<keyword id="KW-0251">Elongation factor</keyword>
<keyword id="KW-0648">Protein biosynthesis</keyword>
<protein>
    <recommendedName>
        <fullName evidence="1">Elongation factor P</fullName>
        <shortName evidence="1">EF-P</shortName>
    </recommendedName>
</protein>
<gene>
    <name evidence="1" type="primary">efp</name>
    <name type="ordered locus">RPE_2930</name>
</gene>
<dbReference type="EMBL" id="CP000463">
    <property type="protein sequence ID" value="ABJ06867.1"/>
    <property type="molecule type" value="Genomic_DNA"/>
</dbReference>
<dbReference type="SMR" id="Q07MG7"/>
<dbReference type="STRING" id="316055.RPE_2930"/>
<dbReference type="KEGG" id="rpe:RPE_2930"/>
<dbReference type="eggNOG" id="COG0231">
    <property type="taxonomic scope" value="Bacteria"/>
</dbReference>
<dbReference type="HOGENOM" id="CLU_074944_1_1_5"/>
<dbReference type="OrthoDB" id="9801844at2"/>
<dbReference type="UniPathway" id="UPA00345"/>
<dbReference type="GO" id="GO:0005737">
    <property type="term" value="C:cytoplasm"/>
    <property type="evidence" value="ECO:0007669"/>
    <property type="project" value="UniProtKB-SubCell"/>
</dbReference>
<dbReference type="GO" id="GO:0003746">
    <property type="term" value="F:translation elongation factor activity"/>
    <property type="evidence" value="ECO:0007669"/>
    <property type="project" value="UniProtKB-UniRule"/>
</dbReference>
<dbReference type="GO" id="GO:0043043">
    <property type="term" value="P:peptide biosynthetic process"/>
    <property type="evidence" value="ECO:0007669"/>
    <property type="project" value="InterPro"/>
</dbReference>
<dbReference type="CDD" id="cd04470">
    <property type="entry name" value="S1_EF-P_repeat_1"/>
    <property type="match status" value="1"/>
</dbReference>
<dbReference type="CDD" id="cd05794">
    <property type="entry name" value="S1_EF-P_repeat_2"/>
    <property type="match status" value="1"/>
</dbReference>
<dbReference type="FunFam" id="2.30.30.30:FF:000044">
    <property type="entry name" value="Elongation factor P"/>
    <property type="match status" value="1"/>
</dbReference>
<dbReference type="FunFam" id="2.40.50.140:FF:000004">
    <property type="entry name" value="Elongation factor P"/>
    <property type="match status" value="1"/>
</dbReference>
<dbReference type="FunFam" id="2.40.50.140:FF:000009">
    <property type="entry name" value="Elongation factor P"/>
    <property type="match status" value="1"/>
</dbReference>
<dbReference type="Gene3D" id="2.30.30.30">
    <property type="match status" value="1"/>
</dbReference>
<dbReference type="Gene3D" id="2.40.50.140">
    <property type="entry name" value="Nucleic acid-binding proteins"/>
    <property type="match status" value="2"/>
</dbReference>
<dbReference type="HAMAP" id="MF_00141">
    <property type="entry name" value="EF_P"/>
    <property type="match status" value="1"/>
</dbReference>
<dbReference type="InterPro" id="IPR015365">
    <property type="entry name" value="Elong-fact-P_C"/>
</dbReference>
<dbReference type="InterPro" id="IPR012340">
    <property type="entry name" value="NA-bd_OB-fold"/>
</dbReference>
<dbReference type="InterPro" id="IPR014722">
    <property type="entry name" value="Rib_uL2_dom2"/>
</dbReference>
<dbReference type="InterPro" id="IPR020599">
    <property type="entry name" value="Transl_elong_fac_P/YeiP"/>
</dbReference>
<dbReference type="InterPro" id="IPR013185">
    <property type="entry name" value="Transl_elong_KOW-like"/>
</dbReference>
<dbReference type="InterPro" id="IPR001059">
    <property type="entry name" value="Transl_elong_P/YeiP_cen"/>
</dbReference>
<dbReference type="InterPro" id="IPR013852">
    <property type="entry name" value="Transl_elong_P/YeiP_CS"/>
</dbReference>
<dbReference type="InterPro" id="IPR011768">
    <property type="entry name" value="Transl_elongation_fac_P"/>
</dbReference>
<dbReference type="InterPro" id="IPR008991">
    <property type="entry name" value="Translation_prot_SH3-like_sf"/>
</dbReference>
<dbReference type="NCBIfam" id="TIGR00038">
    <property type="entry name" value="efp"/>
    <property type="match status" value="1"/>
</dbReference>
<dbReference type="NCBIfam" id="NF001810">
    <property type="entry name" value="PRK00529.1"/>
    <property type="match status" value="1"/>
</dbReference>
<dbReference type="PANTHER" id="PTHR30053">
    <property type="entry name" value="ELONGATION FACTOR P"/>
    <property type="match status" value="1"/>
</dbReference>
<dbReference type="PANTHER" id="PTHR30053:SF14">
    <property type="entry name" value="TRANSLATION ELONGATION FACTOR KOW-LIKE DOMAIN-CONTAINING PROTEIN"/>
    <property type="match status" value="1"/>
</dbReference>
<dbReference type="Pfam" id="PF01132">
    <property type="entry name" value="EFP"/>
    <property type="match status" value="1"/>
</dbReference>
<dbReference type="Pfam" id="PF08207">
    <property type="entry name" value="EFP_N"/>
    <property type="match status" value="1"/>
</dbReference>
<dbReference type="Pfam" id="PF09285">
    <property type="entry name" value="Elong-fact-P_C"/>
    <property type="match status" value="1"/>
</dbReference>
<dbReference type="PIRSF" id="PIRSF005901">
    <property type="entry name" value="EF-P"/>
    <property type="match status" value="1"/>
</dbReference>
<dbReference type="SMART" id="SM01185">
    <property type="entry name" value="EFP"/>
    <property type="match status" value="1"/>
</dbReference>
<dbReference type="SMART" id="SM00841">
    <property type="entry name" value="Elong-fact-P_C"/>
    <property type="match status" value="1"/>
</dbReference>
<dbReference type="SUPFAM" id="SSF50249">
    <property type="entry name" value="Nucleic acid-binding proteins"/>
    <property type="match status" value="2"/>
</dbReference>
<dbReference type="SUPFAM" id="SSF50104">
    <property type="entry name" value="Translation proteins SH3-like domain"/>
    <property type="match status" value="1"/>
</dbReference>
<dbReference type="PROSITE" id="PS01275">
    <property type="entry name" value="EFP"/>
    <property type="match status" value="1"/>
</dbReference>
<reference key="1">
    <citation type="submission" date="2006-09" db="EMBL/GenBank/DDBJ databases">
        <title>Complete sequence of Rhodopseudomonas palustris BisA53.</title>
        <authorList>
            <consortium name="US DOE Joint Genome Institute"/>
            <person name="Copeland A."/>
            <person name="Lucas S."/>
            <person name="Lapidus A."/>
            <person name="Barry K."/>
            <person name="Detter J.C."/>
            <person name="Glavina del Rio T."/>
            <person name="Hammon N."/>
            <person name="Israni S."/>
            <person name="Dalin E."/>
            <person name="Tice H."/>
            <person name="Pitluck S."/>
            <person name="Chain P."/>
            <person name="Malfatti S."/>
            <person name="Shin M."/>
            <person name="Vergez L."/>
            <person name="Schmutz J."/>
            <person name="Larimer F."/>
            <person name="Land M."/>
            <person name="Hauser L."/>
            <person name="Pelletier D.A."/>
            <person name="Kyrpides N."/>
            <person name="Kim E."/>
            <person name="Harwood C.S."/>
            <person name="Oda Y."/>
            <person name="Richardson P."/>
        </authorList>
    </citation>
    <scope>NUCLEOTIDE SEQUENCE [LARGE SCALE GENOMIC DNA]</scope>
    <source>
        <strain>BisA53</strain>
    </source>
</reference>
<name>EFP_RHOP5</name>
<proteinExistence type="inferred from homology"/>
<accession>Q07MG7</accession>
<organism>
    <name type="scientific">Rhodopseudomonas palustris (strain BisA53)</name>
    <dbReference type="NCBI Taxonomy" id="316055"/>
    <lineage>
        <taxon>Bacteria</taxon>
        <taxon>Pseudomonadati</taxon>
        <taxon>Pseudomonadota</taxon>
        <taxon>Alphaproteobacteria</taxon>
        <taxon>Hyphomicrobiales</taxon>
        <taxon>Nitrobacteraceae</taxon>
        <taxon>Rhodopseudomonas</taxon>
    </lineage>
</organism>
<sequence>MRVIASSIRKGNVIEQDGKLYVVLTAENIHPGKGTPVSQIEMRRISDGVKISERYKTTDQVEKATIEDSNFTFLYEDADGFHFMNPESFDQVQVPKEVVGNAAPYLAENMSVKLSMHDTTPVAIQLPQRATLEVVDTEPVTKGQTASSSYKPAMLSNGVRTAVPPHIGVGTRIVVMTEDGSYVERAKD</sequence>
<evidence type="ECO:0000255" key="1">
    <source>
        <dbReference type="HAMAP-Rule" id="MF_00141"/>
    </source>
</evidence>
<feature type="chain" id="PRO_1000010830" description="Elongation factor P">
    <location>
        <begin position="1"/>
        <end position="188"/>
    </location>
</feature>